<name>WNT11_COTJA</name>
<feature type="signal peptide" evidence="5">
    <location>
        <begin position="1"/>
        <end position="24"/>
    </location>
</feature>
<feature type="chain" id="PRO_0000041468" description="Protein Wnt-11">
    <location>
        <begin position="25"/>
        <end position="354"/>
    </location>
</feature>
<feature type="lipid moiety-binding region" description="O-palmitoleoyl serine; by PORCN" evidence="4">
    <location>
        <position position="215"/>
    </location>
</feature>
<feature type="glycosylation site" description="N-linked (GlcNAc...) asparagine" evidence="5">
    <location>
        <position position="40"/>
    </location>
</feature>
<feature type="glycosylation site" description="N-linked (GlcNAc...) asparagine" evidence="5">
    <location>
        <position position="90"/>
    </location>
</feature>
<feature type="glycosylation site" description="N-linked (GlcNAc...) asparagine" evidence="5">
    <location>
        <position position="300"/>
    </location>
</feature>
<feature type="glycosylation site" description="N-linked (GlcNAc...) asparagine" evidence="5">
    <location>
        <position position="304"/>
    </location>
</feature>
<feature type="disulfide bond" evidence="3">
    <location>
        <begin position="80"/>
        <end position="91"/>
    </location>
</feature>
<feature type="disulfide bond" evidence="3">
    <location>
        <begin position="130"/>
        <end position="138"/>
    </location>
</feature>
<feature type="disulfide bond" evidence="3">
    <location>
        <begin position="140"/>
        <end position="157"/>
    </location>
</feature>
<feature type="disulfide bond" evidence="3">
    <location>
        <begin position="209"/>
        <end position="223"/>
    </location>
</feature>
<feature type="disulfide bond" evidence="3">
    <location>
        <begin position="211"/>
        <end position="218"/>
    </location>
</feature>
<feature type="disulfide bond" evidence="3">
    <location>
        <begin position="283"/>
        <end position="314"/>
    </location>
</feature>
<feature type="disulfide bond" evidence="3">
    <location>
        <begin position="299"/>
        <end position="309"/>
    </location>
</feature>
<feature type="disulfide bond" evidence="3">
    <location>
        <begin position="313"/>
        <end position="353"/>
    </location>
</feature>
<feature type="disulfide bond" evidence="3">
    <location>
        <begin position="329"/>
        <end position="344"/>
    </location>
</feature>
<feature type="disulfide bond" evidence="3">
    <location>
        <begin position="331"/>
        <end position="341"/>
    </location>
</feature>
<feature type="disulfide bond" evidence="3">
    <location>
        <begin position="336"/>
        <end position="337"/>
    </location>
</feature>
<comment type="function">
    <text evidence="1">Ligand for members of the frizzled family of seven transmembrane receptors. May play a role in the formation of dermal structure, both limb and feather buds. Is likely to signal over only few cell diameters (By similarity).</text>
</comment>
<comment type="subcellular location">
    <subcellularLocation>
        <location>Secreted</location>
        <location>Extracellular space</location>
        <location>Extracellular matrix</location>
    </subcellularLocation>
</comment>
<comment type="developmental stage">
    <text>Expressed during embryogenesis.</text>
</comment>
<comment type="PTM">
    <text evidence="2 4">Palmitoleoylation is required for efficient binding to frizzled receptors. Depalmitoleoylation leads to Wnt signaling pathway inhibition.</text>
</comment>
<comment type="similarity">
    <text evidence="6">Belongs to the Wnt family.</text>
</comment>
<sequence>MKPSPQFLLAAFLSLILQTGICYGIKWIALSKTPSALALNQTQHCKQLEGLVVSQVQLCRSNLELMQTIIQAAREVIKTCRKTFSDMRWNCSSIELAPNYLLDLERGTRESAFVYALSAAAISHTIARACTTGDLPGCSCGPIPGETPGPGYRWGGCADNLNYGLIMGSKFSDAPMKMKKSGSQANKLMHLHNSEVGRQVLKASLEMKCKCHGVSGSCSIKTCWKGLQELRDIALDLKNKYLSATKVVHRPMGTRKYLVPKDIDIRPVKETELIYLQSSPDFCMKNEKVGSHGTQDRQCNKTSNGSDSCDLMCCGRGYNPYMDKVVERCHCKYHWCCYVTCKKCERTVERYVCK</sequence>
<accession>P51891</accession>
<protein>
    <recommendedName>
        <fullName>Protein Wnt-11</fullName>
    </recommendedName>
</protein>
<organism>
    <name type="scientific">Coturnix japonica</name>
    <name type="common">Japanese quail</name>
    <name type="synonym">Coturnix coturnix japonica</name>
    <dbReference type="NCBI Taxonomy" id="93934"/>
    <lineage>
        <taxon>Eukaryota</taxon>
        <taxon>Metazoa</taxon>
        <taxon>Chordata</taxon>
        <taxon>Craniata</taxon>
        <taxon>Vertebrata</taxon>
        <taxon>Euteleostomi</taxon>
        <taxon>Archelosauria</taxon>
        <taxon>Archosauria</taxon>
        <taxon>Dinosauria</taxon>
        <taxon>Saurischia</taxon>
        <taxon>Theropoda</taxon>
        <taxon>Coelurosauria</taxon>
        <taxon>Aves</taxon>
        <taxon>Neognathae</taxon>
        <taxon>Galloanserae</taxon>
        <taxon>Galliformes</taxon>
        <taxon>Phasianidae</taxon>
        <taxon>Perdicinae</taxon>
        <taxon>Coturnix</taxon>
    </lineage>
</organism>
<keyword id="KW-0217">Developmental protein</keyword>
<keyword id="KW-1015">Disulfide bond</keyword>
<keyword id="KW-0272">Extracellular matrix</keyword>
<keyword id="KW-0325">Glycoprotein</keyword>
<keyword id="KW-0449">Lipoprotein</keyword>
<keyword id="KW-1185">Reference proteome</keyword>
<keyword id="KW-0964">Secreted</keyword>
<keyword id="KW-0732">Signal</keyword>
<keyword id="KW-0879">Wnt signaling pathway</keyword>
<proteinExistence type="evidence at transcript level"/>
<reference key="1">
    <citation type="journal article" date="1997" name="Development">
        <title>Wnt-11 is expressed in early avian mesoderm and required for the differentiation of the quail mesoderm cell line QCE-6.</title>
        <authorList>
            <person name="Eisenberg C.A."/>
            <person name="Gourdie R.G."/>
            <person name="Eisenberg L.M."/>
        </authorList>
    </citation>
    <scope>NUCLEOTIDE SEQUENCE [MRNA]</scope>
    <source>
        <tissue>Mesoderm</tissue>
    </source>
</reference>
<gene>
    <name type="primary">WNT11</name>
    <name type="synonym">WNT-11</name>
</gene>
<dbReference type="EMBL" id="X97549">
    <property type="protein sequence ID" value="CAA66151.1"/>
    <property type="molecule type" value="mRNA"/>
</dbReference>
<dbReference type="RefSeq" id="XP_015707967.1">
    <property type="nucleotide sequence ID" value="XM_015852481.2"/>
</dbReference>
<dbReference type="SMR" id="P51891"/>
<dbReference type="GlyCosmos" id="P51891">
    <property type="glycosylation" value="4 sites, No reported glycans"/>
</dbReference>
<dbReference type="GeneID" id="107308524"/>
<dbReference type="KEGG" id="cjo:107308524"/>
<dbReference type="CTD" id="7481"/>
<dbReference type="OrthoDB" id="5945655at2759"/>
<dbReference type="Proteomes" id="UP000694412">
    <property type="component" value="Unplaced"/>
</dbReference>
<dbReference type="GO" id="GO:0005737">
    <property type="term" value="C:cytoplasm"/>
    <property type="evidence" value="ECO:0000250"/>
    <property type="project" value="UniProtKB"/>
</dbReference>
<dbReference type="GO" id="GO:0005615">
    <property type="term" value="C:extracellular space"/>
    <property type="evidence" value="ECO:0007669"/>
    <property type="project" value="TreeGrafter"/>
</dbReference>
<dbReference type="GO" id="GO:0005125">
    <property type="term" value="F:cytokine activity"/>
    <property type="evidence" value="ECO:0007669"/>
    <property type="project" value="TreeGrafter"/>
</dbReference>
<dbReference type="GO" id="GO:0005109">
    <property type="term" value="F:frizzled binding"/>
    <property type="evidence" value="ECO:0007669"/>
    <property type="project" value="TreeGrafter"/>
</dbReference>
<dbReference type="GO" id="GO:0060070">
    <property type="term" value="P:canonical Wnt signaling pathway"/>
    <property type="evidence" value="ECO:0007669"/>
    <property type="project" value="TreeGrafter"/>
</dbReference>
<dbReference type="GO" id="GO:0045165">
    <property type="term" value="P:cell fate commitment"/>
    <property type="evidence" value="ECO:0007669"/>
    <property type="project" value="TreeGrafter"/>
</dbReference>
<dbReference type="GO" id="GO:0035556">
    <property type="term" value="P:intracellular signal transduction"/>
    <property type="evidence" value="ECO:0000250"/>
    <property type="project" value="UniProtKB"/>
</dbReference>
<dbReference type="GO" id="GO:0090090">
    <property type="term" value="P:negative regulation of canonical Wnt signaling pathway"/>
    <property type="evidence" value="ECO:0000250"/>
    <property type="project" value="UniProtKB"/>
</dbReference>
<dbReference type="GO" id="GO:0061101">
    <property type="term" value="P:neuroendocrine cell differentiation"/>
    <property type="evidence" value="ECO:0000250"/>
    <property type="project" value="UniProtKB"/>
</dbReference>
<dbReference type="GO" id="GO:0045893">
    <property type="term" value="P:positive regulation of DNA-templated transcription"/>
    <property type="evidence" value="ECO:0000250"/>
    <property type="project" value="UniProtKB"/>
</dbReference>
<dbReference type="GO" id="GO:0062009">
    <property type="term" value="P:secondary palate development"/>
    <property type="evidence" value="ECO:0000250"/>
    <property type="project" value="UniProtKB"/>
</dbReference>
<dbReference type="GO" id="GO:0007165">
    <property type="term" value="P:signal transduction"/>
    <property type="evidence" value="ECO:0000250"/>
    <property type="project" value="UniProtKB"/>
</dbReference>
<dbReference type="CDD" id="cd19343">
    <property type="entry name" value="Wnt_Wnt11"/>
    <property type="match status" value="1"/>
</dbReference>
<dbReference type="FunFam" id="3.30.2460.20:FF:000001">
    <property type="entry name" value="Wnt homolog"/>
    <property type="match status" value="1"/>
</dbReference>
<dbReference type="Gene3D" id="3.30.2460.20">
    <property type="match status" value="1"/>
</dbReference>
<dbReference type="InterPro" id="IPR005817">
    <property type="entry name" value="Wnt"/>
</dbReference>
<dbReference type="InterPro" id="IPR043158">
    <property type="entry name" value="Wnt_C"/>
</dbReference>
<dbReference type="InterPro" id="IPR018161">
    <property type="entry name" value="Wnt_CS"/>
</dbReference>
<dbReference type="PANTHER" id="PTHR12027:SF7">
    <property type="entry name" value="PROTEIN WNT-11"/>
    <property type="match status" value="1"/>
</dbReference>
<dbReference type="PANTHER" id="PTHR12027">
    <property type="entry name" value="WNT RELATED"/>
    <property type="match status" value="1"/>
</dbReference>
<dbReference type="Pfam" id="PF00110">
    <property type="entry name" value="wnt"/>
    <property type="match status" value="1"/>
</dbReference>
<dbReference type="PRINTS" id="PR01349">
    <property type="entry name" value="WNTPROTEIN"/>
</dbReference>
<dbReference type="SMART" id="SM00097">
    <property type="entry name" value="WNT1"/>
    <property type="match status" value="1"/>
</dbReference>
<dbReference type="PROSITE" id="PS00246">
    <property type="entry name" value="WNT1"/>
    <property type="match status" value="1"/>
</dbReference>
<evidence type="ECO:0000250" key="1"/>
<evidence type="ECO:0000250" key="2">
    <source>
        <dbReference type="UniProtKB" id="P27467"/>
    </source>
</evidence>
<evidence type="ECO:0000250" key="3">
    <source>
        <dbReference type="UniProtKB" id="P28026"/>
    </source>
</evidence>
<evidence type="ECO:0000250" key="4">
    <source>
        <dbReference type="UniProtKB" id="P56704"/>
    </source>
</evidence>
<evidence type="ECO:0000255" key="5"/>
<evidence type="ECO:0000305" key="6"/>